<comment type="catalytic activity">
    <reaction evidence="7">
        <text>tRNA(Asn) + L-asparagine + ATP = L-asparaginyl-tRNA(Asn) + AMP + diphosphate + H(+)</text>
        <dbReference type="Rhea" id="RHEA:11180"/>
        <dbReference type="Rhea" id="RHEA-COMP:9659"/>
        <dbReference type="Rhea" id="RHEA-COMP:9674"/>
        <dbReference type="ChEBI" id="CHEBI:15378"/>
        <dbReference type="ChEBI" id="CHEBI:30616"/>
        <dbReference type="ChEBI" id="CHEBI:33019"/>
        <dbReference type="ChEBI" id="CHEBI:58048"/>
        <dbReference type="ChEBI" id="CHEBI:78442"/>
        <dbReference type="ChEBI" id="CHEBI:78515"/>
        <dbReference type="ChEBI" id="CHEBI:456215"/>
        <dbReference type="EC" id="6.1.1.22"/>
    </reaction>
</comment>
<comment type="subcellular location">
    <subcellularLocation>
        <location evidence="2">Plastid</location>
        <location evidence="2">Chloroplast</location>
    </subcellularLocation>
    <subcellularLocation>
        <location evidence="2">Mitochondrion</location>
    </subcellularLocation>
</comment>
<comment type="disruption phenotype">
    <text evidence="3">Lethal. In heterozygous plants, aborted ovules.</text>
</comment>
<comment type="similarity">
    <text evidence="7">Belongs to the class-II aminoacyl-tRNA synthetase family.</text>
</comment>
<comment type="sequence caution" evidence="7">
    <conflict type="erroneous gene model prediction">
        <sequence resource="EMBL-CDS" id="CAB10511"/>
    </conflict>
</comment>
<comment type="sequence caution" evidence="7">
    <conflict type="erroneous gene model prediction">
        <sequence resource="EMBL-CDS" id="CAB78733"/>
    </conflict>
</comment>
<proteinExistence type="evidence at transcript level"/>
<gene>
    <name evidence="4" type="primary">SYNO</name>
    <name evidence="6" type="synonym">NS1</name>
    <name evidence="5" type="synonym">OVA8</name>
    <name type="ordered locus">At4g17300</name>
    <name type="ORF">dl4685w</name>
</gene>
<reference key="1">
    <citation type="journal article" date="1998" name="Nature">
        <title>Analysis of 1.9 Mb of contiguous sequence from chromosome 4 of Arabidopsis thaliana.</title>
        <authorList>
            <person name="Bevan M."/>
            <person name="Bancroft I."/>
            <person name="Bent E."/>
            <person name="Love K."/>
            <person name="Goodman H.M."/>
            <person name="Dean C."/>
            <person name="Bergkamp R."/>
            <person name="Dirkse W."/>
            <person name="van Staveren M."/>
            <person name="Stiekema W."/>
            <person name="Drost L."/>
            <person name="Ridley P."/>
            <person name="Hudson S.-A."/>
            <person name="Patel K."/>
            <person name="Murphy G."/>
            <person name="Piffanelli P."/>
            <person name="Wedler H."/>
            <person name="Wedler E."/>
            <person name="Wambutt R."/>
            <person name="Weitzenegger T."/>
            <person name="Pohl T."/>
            <person name="Terryn N."/>
            <person name="Gielen J."/>
            <person name="Villarroel R."/>
            <person name="De Clercq R."/>
            <person name="van Montagu M."/>
            <person name="Lecharny A."/>
            <person name="Aubourg S."/>
            <person name="Gy I."/>
            <person name="Kreis M."/>
            <person name="Lao N."/>
            <person name="Kavanagh T."/>
            <person name="Hempel S."/>
            <person name="Kotter P."/>
            <person name="Entian K.-D."/>
            <person name="Rieger M."/>
            <person name="Schaefer M."/>
            <person name="Funk B."/>
            <person name="Mueller-Auer S."/>
            <person name="Silvey M."/>
            <person name="James R."/>
            <person name="Monfort A."/>
            <person name="Pons A."/>
            <person name="Puigdomenech P."/>
            <person name="Douka A."/>
            <person name="Voukelatou E."/>
            <person name="Milioni D."/>
            <person name="Hatzopoulos P."/>
            <person name="Piravandi E."/>
            <person name="Obermaier B."/>
            <person name="Hilbert H."/>
            <person name="Duesterhoeft A."/>
            <person name="Moores T."/>
            <person name="Jones J.D.G."/>
            <person name="Eneva T."/>
            <person name="Palme K."/>
            <person name="Benes V."/>
            <person name="Rechmann S."/>
            <person name="Ansorge W."/>
            <person name="Cooke R."/>
            <person name="Berger C."/>
            <person name="Delseny M."/>
            <person name="Voet M."/>
            <person name="Volckaert G."/>
            <person name="Mewes H.-W."/>
            <person name="Klosterman S."/>
            <person name="Schueller C."/>
            <person name="Chalwatzis N."/>
        </authorList>
    </citation>
    <scope>NUCLEOTIDE SEQUENCE [LARGE SCALE GENOMIC DNA]</scope>
    <source>
        <strain>cv. Columbia</strain>
    </source>
</reference>
<reference key="2">
    <citation type="journal article" date="1999" name="Nature">
        <title>Sequence and analysis of chromosome 4 of the plant Arabidopsis thaliana.</title>
        <authorList>
            <person name="Mayer K.F.X."/>
            <person name="Schueller C."/>
            <person name="Wambutt R."/>
            <person name="Murphy G."/>
            <person name="Volckaert G."/>
            <person name="Pohl T."/>
            <person name="Duesterhoeft A."/>
            <person name="Stiekema W."/>
            <person name="Entian K.-D."/>
            <person name="Terryn N."/>
            <person name="Harris B."/>
            <person name="Ansorge W."/>
            <person name="Brandt P."/>
            <person name="Grivell L.A."/>
            <person name="Rieger M."/>
            <person name="Weichselgartner M."/>
            <person name="de Simone V."/>
            <person name="Obermaier B."/>
            <person name="Mache R."/>
            <person name="Mueller M."/>
            <person name="Kreis M."/>
            <person name="Delseny M."/>
            <person name="Puigdomenech P."/>
            <person name="Watson M."/>
            <person name="Schmidtheini T."/>
            <person name="Reichert B."/>
            <person name="Portetelle D."/>
            <person name="Perez-Alonso M."/>
            <person name="Boutry M."/>
            <person name="Bancroft I."/>
            <person name="Vos P."/>
            <person name="Hoheisel J."/>
            <person name="Zimmermann W."/>
            <person name="Wedler H."/>
            <person name="Ridley P."/>
            <person name="Langham S.-A."/>
            <person name="McCullagh B."/>
            <person name="Bilham L."/>
            <person name="Robben J."/>
            <person name="van der Schueren J."/>
            <person name="Grymonprez B."/>
            <person name="Chuang Y.-J."/>
            <person name="Vandenbussche F."/>
            <person name="Braeken M."/>
            <person name="Weltjens I."/>
            <person name="Voet M."/>
            <person name="Bastiaens I."/>
            <person name="Aert R."/>
            <person name="Defoor E."/>
            <person name="Weitzenegger T."/>
            <person name="Bothe G."/>
            <person name="Ramsperger U."/>
            <person name="Hilbert H."/>
            <person name="Braun M."/>
            <person name="Holzer E."/>
            <person name="Brandt A."/>
            <person name="Peters S."/>
            <person name="van Staveren M."/>
            <person name="Dirkse W."/>
            <person name="Mooijman P."/>
            <person name="Klein Lankhorst R."/>
            <person name="Rose M."/>
            <person name="Hauf J."/>
            <person name="Koetter P."/>
            <person name="Berneiser S."/>
            <person name="Hempel S."/>
            <person name="Feldpausch M."/>
            <person name="Lamberth S."/>
            <person name="Van den Daele H."/>
            <person name="De Keyser A."/>
            <person name="Buysshaert C."/>
            <person name="Gielen J."/>
            <person name="Villarroel R."/>
            <person name="De Clercq R."/>
            <person name="van Montagu M."/>
            <person name="Rogers J."/>
            <person name="Cronin A."/>
            <person name="Quail M.A."/>
            <person name="Bray-Allen S."/>
            <person name="Clark L."/>
            <person name="Doggett J."/>
            <person name="Hall S."/>
            <person name="Kay M."/>
            <person name="Lennard N."/>
            <person name="McLay K."/>
            <person name="Mayes R."/>
            <person name="Pettett A."/>
            <person name="Rajandream M.A."/>
            <person name="Lyne M."/>
            <person name="Benes V."/>
            <person name="Rechmann S."/>
            <person name="Borkova D."/>
            <person name="Bloecker H."/>
            <person name="Scharfe M."/>
            <person name="Grimm M."/>
            <person name="Loehnert T.-H."/>
            <person name="Dose S."/>
            <person name="de Haan M."/>
            <person name="Maarse A.C."/>
            <person name="Schaefer M."/>
            <person name="Mueller-Auer S."/>
            <person name="Gabel C."/>
            <person name="Fuchs M."/>
            <person name="Fartmann B."/>
            <person name="Granderath K."/>
            <person name="Dauner D."/>
            <person name="Herzl A."/>
            <person name="Neumann S."/>
            <person name="Argiriou A."/>
            <person name="Vitale D."/>
            <person name="Liguori R."/>
            <person name="Piravandi E."/>
            <person name="Massenet O."/>
            <person name="Quigley F."/>
            <person name="Clabauld G."/>
            <person name="Muendlein A."/>
            <person name="Felber R."/>
            <person name="Schnabl S."/>
            <person name="Hiller R."/>
            <person name="Schmidt W."/>
            <person name="Lecharny A."/>
            <person name="Aubourg S."/>
            <person name="Chefdor F."/>
            <person name="Cooke R."/>
            <person name="Berger C."/>
            <person name="Monfort A."/>
            <person name="Casacuberta E."/>
            <person name="Gibbons T."/>
            <person name="Weber N."/>
            <person name="Vandenbol M."/>
            <person name="Bargues M."/>
            <person name="Terol J."/>
            <person name="Torres A."/>
            <person name="Perez-Perez A."/>
            <person name="Purnelle B."/>
            <person name="Bent E."/>
            <person name="Johnson S."/>
            <person name="Tacon D."/>
            <person name="Jesse T."/>
            <person name="Heijnen L."/>
            <person name="Schwarz S."/>
            <person name="Scholler P."/>
            <person name="Heber S."/>
            <person name="Francs P."/>
            <person name="Bielke C."/>
            <person name="Frishman D."/>
            <person name="Haase D."/>
            <person name="Lemcke K."/>
            <person name="Mewes H.-W."/>
            <person name="Stocker S."/>
            <person name="Zaccaria P."/>
            <person name="Bevan M."/>
            <person name="Wilson R.K."/>
            <person name="de la Bastide M."/>
            <person name="Habermann K."/>
            <person name="Parnell L."/>
            <person name="Dedhia N."/>
            <person name="Gnoj L."/>
            <person name="Schutz K."/>
            <person name="Huang E."/>
            <person name="Spiegel L."/>
            <person name="Sekhon M."/>
            <person name="Murray J."/>
            <person name="Sheet P."/>
            <person name="Cordes M."/>
            <person name="Abu-Threideh J."/>
            <person name="Stoneking T."/>
            <person name="Kalicki J."/>
            <person name="Graves T."/>
            <person name="Harmon G."/>
            <person name="Edwards J."/>
            <person name="Latreille P."/>
            <person name="Courtney L."/>
            <person name="Cloud J."/>
            <person name="Abbott A."/>
            <person name="Scott K."/>
            <person name="Johnson D."/>
            <person name="Minx P."/>
            <person name="Bentley D."/>
            <person name="Fulton B."/>
            <person name="Miller N."/>
            <person name="Greco T."/>
            <person name="Kemp K."/>
            <person name="Kramer J."/>
            <person name="Fulton L."/>
            <person name="Mardis E."/>
            <person name="Dante M."/>
            <person name="Pepin K."/>
            <person name="Hillier L.W."/>
            <person name="Nelson J."/>
            <person name="Spieth J."/>
            <person name="Ryan E."/>
            <person name="Andrews S."/>
            <person name="Geisel C."/>
            <person name="Layman D."/>
            <person name="Du H."/>
            <person name="Ali J."/>
            <person name="Berghoff A."/>
            <person name="Jones K."/>
            <person name="Drone K."/>
            <person name="Cotton M."/>
            <person name="Joshu C."/>
            <person name="Antonoiu B."/>
            <person name="Zidanic M."/>
            <person name="Strong C."/>
            <person name="Sun H."/>
            <person name="Lamar B."/>
            <person name="Yordan C."/>
            <person name="Ma P."/>
            <person name="Zhong J."/>
            <person name="Preston R."/>
            <person name="Vil D."/>
            <person name="Shekher M."/>
            <person name="Matero A."/>
            <person name="Shah R."/>
            <person name="Swaby I.K."/>
            <person name="O'Shaughnessy A."/>
            <person name="Rodriguez M."/>
            <person name="Hoffman J."/>
            <person name="Till S."/>
            <person name="Granat S."/>
            <person name="Shohdy N."/>
            <person name="Hasegawa A."/>
            <person name="Hameed A."/>
            <person name="Lodhi M."/>
            <person name="Johnson A."/>
            <person name="Chen E."/>
            <person name="Marra M.A."/>
            <person name="Martienssen R."/>
            <person name="McCombie W.R."/>
        </authorList>
    </citation>
    <scope>NUCLEOTIDE SEQUENCE [LARGE SCALE GENOMIC DNA]</scope>
    <source>
        <strain>cv. Columbia</strain>
    </source>
</reference>
<reference key="3">
    <citation type="journal article" date="2017" name="Plant J.">
        <title>Araport11: a complete reannotation of the Arabidopsis thaliana reference genome.</title>
        <authorList>
            <person name="Cheng C.Y."/>
            <person name="Krishnakumar V."/>
            <person name="Chan A.P."/>
            <person name="Thibaud-Nissen F."/>
            <person name="Schobel S."/>
            <person name="Town C.D."/>
        </authorList>
    </citation>
    <scope>GENOME REANNOTATION</scope>
    <source>
        <strain>cv. Columbia</strain>
    </source>
</reference>
<reference key="4">
    <citation type="journal article" date="2003" name="Science">
        <title>Empirical analysis of transcriptional activity in the Arabidopsis genome.</title>
        <authorList>
            <person name="Yamada K."/>
            <person name="Lim J."/>
            <person name="Dale J.M."/>
            <person name="Chen H."/>
            <person name="Shinn P."/>
            <person name="Palm C.J."/>
            <person name="Southwick A.M."/>
            <person name="Wu H.C."/>
            <person name="Kim C.J."/>
            <person name="Nguyen M."/>
            <person name="Pham P.K."/>
            <person name="Cheuk R.F."/>
            <person name="Karlin-Newmann G."/>
            <person name="Liu S.X."/>
            <person name="Lam B."/>
            <person name="Sakano H."/>
            <person name="Wu T."/>
            <person name="Yu G."/>
            <person name="Miranda M."/>
            <person name="Quach H.L."/>
            <person name="Tripp M."/>
            <person name="Chang C.H."/>
            <person name="Lee J.M."/>
            <person name="Toriumi M.J."/>
            <person name="Chan M.M."/>
            <person name="Tang C.C."/>
            <person name="Onodera C.S."/>
            <person name="Deng J.M."/>
            <person name="Akiyama K."/>
            <person name="Ansari Y."/>
            <person name="Arakawa T."/>
            <person name="Banh J."/>
            <person name="Banno F."/>
            <person name="Bowser L."/>
            <person name="Brooks S.Y."/>
            <person name="Carninci P."/>
            <person name="Chao Q."/>
            <person name="Choy N."/>
            <person name="Enju A."/>
            <person name="Goldsmith A.D."/>
            <person name="Gurjal M."/>
            <person name="Hansen N.F."/>
            <person name="Hayashizaki Y."/>
            <person name="Johnson-Hopson C."/>
            <person name="Hsuan V.W."/>
            <person name="Iida K."/>
            <person name="Karnes M."/>
            <person name="Khan S."/>
            <person name="Koesema E."/>
            <person name="Ishida J."/>
            <person name="Jiang P.X."/>
            <person name="Jones T."/>
            <person name="Kawai J."/>
            <person name="Kamiya A."/>
            <person name="Meyers C."/>
            <person name="Nakajima M."/>
            <person name="Narusaka M."/>
            <person name="Seki M."/>
            <person name="Sakurai T."/>
            <person name="Satou M."/>
            <person name="Tamse R."/>
            <person name="Vaysberg M."/>
            <person name="Wallender E.K."/>
            <person name="Wong C."/>
            <person name="Yamamura Y."/>
            <person name="Yuan S."/>
            <person name="Shinozaki K."/>
            <person name="Davis R.W."/>
            <person name="Theologis A."/>
            <person name="Ecker J.R."/>
        </authorList>
    </citation>
    <scope>NUCLEOTIDE SEQUENCE [LARGE SCALE MRNA]</scope>
    <source>
        <strain>cv. Columbia</strain>
    </source>
</reference>
<reference key="5">
    <citation type="journal article" date="1998" name="Biochim. Biophys. Acta">
        <title>Structure and expression of an asparaginyl-tRNA synthetase gene located on chromosome IV of Arabidopsis thaliana and adjacent to a novel large gene of 15 exons.</title>
        <authorList>
            <person name="Aubourg S."/>
            <person name="Cheron A."/>
            <person name="Kreis M."/>
            <person name="Lecharny A."/>
        </authorList>
    </citation>
    <scope>NUCLEOTIDE SEQUENCE [MRNA] OF 2-566</scope>
    <source>
        <strain>cv. Columbia</strain>
    </source>
</reference>
<reference key="6">
    <citation type="journal article" date="2000" name="J. Mol. Evol.">
        <title>Duplication and quadruplication of Arabidopsis thaliana cysteinyl- and asparaginyl-tRNA synthetase genes of organellar origin.</title>
        <authorList>
            <person name="Peeters N.M."/>
            <person name="Chapron A."/>
            <person name="Giritch A."/>
            <person name="Grandjean O."/>
            <person name="Lancelin D."/>
            <person name="Lhomme T."/>
            <person name="Vivrel A."/>
            <person name="Small I."/>
        </authorList>
    </citation>
    <scope>SUBCELLULAR LOCATION</scope>
</reference>
<reference key="7">
    <citation type="journal article" date="2005" name="Plant J.">
        <title>Requirement of aminoacyl-tRNA synthetases for gametogenesis and embryo development in Arabidopsis.</title>
        <authorList>
            <person name="Berg M."/>
            <person name="Rogers R."/>
            <person name="Muralla R."/>
            <person name="Meinke D."/>
        </authorList>
    </citation>
    <scope>DISRUPTION PHENOTYPE</scope>
</reference>
<evidence type="ECO:0000255" key="1"/>
<evidence type="ECO:0000269" key="2">
    <source>
    </source>
</evidence>
<evidence type="ECO:0000269" key="3">
    <source>
    </source>
</evidence>
<evidence type="ECO:0000303" key="4">
    <source>
    </source>
</evidence>
<evidence type="ECO:0000303" key="5">
    <source>
    </source>
</evidence>
<evidence type="ECO:0000303" key="6">
    <source>
    </source>
</evidence>
<evidence type="ECO:0000305" key="7"/>
<name>SYNO_ARATH</name>
<sequence>MAATFLPATSLRLTQNSTLRFLSFFTISNPSYSLFRPLRRRVLPPFDAFPANSRRRCFCTAVSESLGSGDGNKVESYEKRFGSKVGEFRKKLRIAEVKGGADEGLSRVGQSLNIMGWVRTLRSQSSVTFIEINDGSCLSNLQCVMTSDAEGYDQVESGSILTGASVSVQGTIVASQGTKQKVELKVEKIIVVGECDSSYPIQKKRVSREFLRTKAHLRPRTNTFGAVARVRNTLAYATHKFFQESGFVWVASPIITASDCEGAGEQFCVTTLIPSSHENTDTSIDAIPKTKGGLIDWSQDFFGKPAFLTVSGQLNGETYATALSDVYTFGPTFRAENSNTSRHLAEFWMIEPELAFADLDDDMACATAYLQYVVKYVLDNCKEDMEFFDTWIEKGIIRRLSDVAEKEFLQLGYTDAIEILLKANKKFDFPVKWGLDLQSEHERYITEEAFGGRPVIIRDYPKEIKAFYMRENDDGKTVAAMDMLVPRIGELIGGSQREERLEVLEARLDELKLNKESYWWYLDLRRYGSVPHAGFGLGFERLVQFVTGIDNIRDVIPFPRTPASAEF</sequence>
<keyword id="KW-0030">Aminoacyl-tRNA synthetase</keyword>
<keyword id="KW-0067">ATP-binding</keyword>
<keyword id="KW-0150">Chloroplast</keyword>
<keyword id="KW-0238">DNA-binding</keyword>
<keyword id="KW-0436">Ligase</keyword>
<keyword id="KW-0496">Mitochondrion</keyword>
<keyword id="KW-0547">Nucleotide-binding</keyword>
<keyword id="KW-0934">Plastid</keyword>
<keyword id="KW-0648">Protein biosynthesis</keyword>
<keyword id="KW-1185">Reference proteome</keyword>
<keyword id="KW-0809">Transit peptide</keyword>
<dbReference type="EC" id="6.1.1.22" evidence="7"/>
<dbReference type="EMBL" id="Z97343">
    <property type="protein sequence ID" value="CAB10511.1"/>
    <property type="status" value="ALT_SEQ"/>
    <property type="molecule type" value="Genomic_DNA"/>
</dbReference>
<dbReference type="EMBL" id="AL161546">
    <property type="protein sequence ID" value="CAB78733.1"/>
    <property type="status" value="ALT_SEQ"/>
    <property type="molecule type" value="Genomic_DNA"/>
</dbReference>
<dbReference type="EMBL" id="CP002687">
    <property type="protein sequence ID" value="AEE83874.1"/>
    <property type="molecule type" value="Genomic_DNA"/>
</dbReference>
<dbReference type="EMBL" id="AY078967">
    <property type="protein sequence ID" value="AAL84964.1"/>
    <property type="molecule type" value="mRNA"/>
</dbReference>
<dbReference type="EMBL" id="AJ222644">
    <property type="protein sequence ID" value="CAA10904.1"/>
    <property type="molecule type" value="mRNA"/>
</dbReference>
<dbReference type="RefSeq" id="NP_193462.1">
    <property type="nucleotide sequence ID" value="NM_117835.5"/>
</dbReference>
<dbReference type="SMR" id="O48593"/>
<dbReference type="FunCoup" id="O48593">
    <property type="interactions" value="2724"/>
</dbReference>
<dbReference type="STRING" id="3702.O48593"/>
<dbReference type="PaxDb" id="3702-AT4G17300.1"/>
<dbReference type="ProteomicsDB" id="228467"/>
<dbReference type="EnsemblPlants" id="AT4G17300.1">
    <property type="protein sequence ID" value="AT4G17300.1"/>
    <property type="gene ID" value="AT4G17300"/>
</dbReference>
<dbReference type="GeneID" id="827443"/>
<dbReference type="Gramene" id="AT4G17300.1">
    <property type="protein sequence ID" value="AT4G17300.1"/>
    <property type="gene ID" value="AT4G17300"/>
</dbReference>
<dbReference type="KEGG" id="ath:AT4G17300"/>
<dbReference type="Araport" id="AT4G17300"/>
<dbReference type="TAIR" id="AT4G17300">
    <property type="gene designation" value="NS1"/>
</dbReference>
<dbReference type="eggNOG" id="KOG0554">
    <property type="taxonomic scope" value="Eukaryota"/>
</dbReference>
<dbReference type="HOGENOM" id="CLU_004553_2_0_1"/>
<dbReference type="InParanoid" id="O48593"/>
<dbReference type="PhylomeDB" id="O48593"/>
<dbReference type="PRO" id="PR:O48593"/>
<dbReference type="Proteomes" id="UP000006548">
    <property type="component" value="Chromosome 4"/>
</dbReference>
<dbReference type="ExpressionAtlas" id="O48593">
    <property type="expression patterns" value="baseline and differential"/>
</dbReference>
<dbReference type="GO" id="GO:0009507">
    <property type="term" value="C:chloroplast"/>
    <property type="evidence" value="ECO:0000314"/>
    <property type="project" value="TAIR"/>
</dbReference>
<dbReference type="GO" id="GO:0009570">
    <property type="term" value="C:chloroplast stroma"/>
    <property type="evidence" value="ECO:0007005"/>
    <property type="project" value="TAIR"/>
</dbReference>
<dbReference type="GO" id="GO:0005739">
    <property type="term" value="C:mitochondrion"/>
    <property type="evidence" value="ECO:0000314"/>
    <property type="project" value="TAIR"/>
</dbReference>
<dbReference type="GO" id="GO:0004816">
    <property type="term" value="F:asparagine-tRNA ligase activity"/>
    <property type="evidence" value="ECO:0000250"/>
    <property type="project" value="TAIR"/>
</dbReference>
<dbReference type="GO" id="GO:0005524">
    <property type="term" value="F:ATP binding"/>
    <property type="evidence" value="ECO:0007669"/>
    <property type="project" value="UniProtKB-KW"/>
</dbReference>
<dbReference type="GO" id="GO:0003677">
    <property type="term" value="F:DNA binding"/>
    <property type="evidence" value="ECO:0007669"/>
    <property type="project" value="UniProtKB-KW"/>
</dbReference>
<dbReference type="GO" id="GO:0006421">
    <property type="term" value="P:asparaginyl-tRNA aminoacylation"/>
    <property type="evidence" value="ECO:0000250"/>
    <property type="project" value="TAIR"/>
</dbReference>
<dbReference type="GO" id="GO:0048481">
    <property type="term" value="P:plant ovule development"/>
    <property type="evidence" value="ECO:0000315"/>
    <property type="project" value="TAIR"/>
</dbReference>
<dbReference type="CDD" id="cd00776">
    <property type="entry name" value="AsxRS_core"/>
    <property type="match status" value="1"/>
</dbReference>
<dbReference type="CDD" id="cd04318">
    <property type="entry name" value="EcAsnRS_like_N"/>
    <property type="match status" value="1"/>
</dbReference>
<dbReference type="FunFam" id="3.30.930.10:FF:000016">
    <property type="entry name" value="Asparagine--tRNA ligase"/>
    <property type="match status" value="1"/>
</dbReference>
<dbReference type="FunFam" id="2.40.50.140:FF:000310">
    <property type="entry name" value="Probable asparagine--tRNA ligase, mitochondrial"/>
    <property type="match status" value="1"/>
</dbReference>
<dbReference type="Gene3D" id="3.30.930.10">
    <property type="entry name" value="Bira Bifunctional Protein, Domain 2"/>
    <property type="match status" value="1"/>
</dbReference>
<dbReference type="Gene3D" id="2.40.50.140">
    <property type="entry name" value="Nucleic acid-binding proteins"/>
    <property type="match status" value="1"/>
</dbReference>
<dbReference type="HAMAP" id="MF_00534">
    <property type="entry name" value="Asn_tRNA_synth"/>
    <property type="match status" value="1"/>
</dbReference>
<dbReference type="InterPro" id="IPR004364">
    <property type="entry name" value="Aa-tRNA-synt_II"/>
</dbReference>
<dbReference type="InterPro" id="IPR006195">
    <property type="entry name" value="aa-tRNA-synth_II"/>
</dbReference>
<dbReference type="InterPro" id="IPR045864">
    <property type="entry name" value="aa-tRNA-synth_II/BPL/LPL"/>
</dbReference>
<dbReference type="InterPro" id="IPR004522">
    <property type="entry name" value="Asn-tRNA-ligase"/>
</dbReference>
<dbReference type="InterPro" id="IPR002312">
    <property type="entry name" value="Asp/Asn-tRNA-synth_IIb"/>
</dbReference>
<dbReference type="InterPro" id="IPR012340">
    <property type="entry name" value="NA-bd_OB-fold"/>
</dbReference>
<dbReference type="InterPro" id="IPR004365">
    <property type="entry name" value="NA-bd_OB_tRNA"/>
</dbReference>
<dbReference type="NCBIfam" id="TIGR00457">
    <property type="entry name" value="asnS"/>
    <property type="match status" value="1"/>
</dbReference>
<dbReference type="NCBIfam" id="NF003037">
    <property type="entry name" value="PRK03932.1"/>
    <property type="match status" value="1"/>
</dbReference>
<dbReference type="PANTHER" id="PTHR22594:SF34">
    <property type="entry name" value="ASPARAGINE--TRNA LIGASE, MITOCHONDRIAL-RELATED"/>
    <property type="match status" value="1"/>
</dbReference>
<dbReference type="PANTHER" id="PTHR22594">
    <property type="entry name" value="ASPARTYL/LYSYL-TRNA SYNTHETASE"/>
    <property type="match status" value="1"/>
</dbReference>
<dbReference type="Pfam" id="PF00152">
    <property type="entry name" value="tRNA-synt_2"/>
    <property type="match status" value="1"/>
</dbReference>
<dbReference type="Pfam" id="PF01336">
    <property type="entry name" value="tRNA_anti-codon"/>
    <property type="match status" value="1"/>
</dbReference>
<dbReference type="PRINTS" id="PR01042">
    <property type="entry name" value="TRNASYNTHASP"/>
</dbReference>
<dbReference type="SUPFAM" id="SSF55681">
    <property type="entry name" value="Class II aaRS and biotin synthetases"/>
    <property type="match status" value="1"/>
</dbReference>
<dbReference type="SUPFAM" id="SSF50249">
    <property type="entry name" value="Nucleic acid-binding proteins"/>
    <property type="match status" value="1"/>
</dbReference>
<dbReference type="PROSITE" id="PS50862">
    <property type="entry name" value="AA_TRNA_LIGASE_II"/>
    <property type="match status" value="1"/>
</dbReference>
<organism>
    <name type="scientific">Arabidopsis thaliana</name>
    <name type="common">Mouse-ear cress</name>
    <dbReference type="NCBI Taxonomy" id="3702"/>
    <lineage>
        <taxon>Eukaryota</taxon>
        <taxon>Viridiplantae</taxon>
        <taxon>Streptophyta</taxon>
        <taxon>Embryophyta</taxon>
        <taxon>Tracheophyta</taxon>
        <taxon>Spermatophyta</taxon>
        <taxon>Magnoliopsida</taxon>
        <taxon>eudicotyledons</taxon>
        <taxon>Gunneridae</taxon>
        <taxon>Pentapetalae</taxon>
        <taxon>rosids</taxon>
        <taxon>malvids</taxon>
        <taxon>Brassicales</taxon>
        <taxon>Brassicaceae</taxon>
        <taxon>Camelineae</taxon>
        <taxon>Arabidopsis</taxon>
    </lineage>
</organism>
<accession>O48593</accession>
<accession>O23573</accession>
<accession>Q564D6</accession>
<protein>
    <recommendedName>
        <fullName evidence="7">Asparagine--tRNA ligase, chloroplastic/mitochondrial</fullName>
        <ecNumber evidence="7">6.1.1.22</ecNumber>
    </recommendedName>
    <alternativeName>
        <fullName evidence="7">Asparaginyl-tRNA synthetase</fullName>
        <shortName evidence="7">AsnRS</shortName>
    </alternativeName>
    <alternativeName>
        <fullName evidence="6">AtNS1</fullName>
    </alternativeName>
    <alternativeName>
        <fullName evidence="5">Protein OVULE ABORTION 8</fullName>
    </alternativeName>
</protein>
<feature type="transit peptide" description="Chloroplast and mitochondrion" evidence="1">
    <location>
        <begin position="1"/>
        <end status="unknown"/>
    </location>
</feature>
<feature type="chain" id="PRO_0000035800" description="Asparagine--tRNA ligase, chloroplastic/mitochondrial">
    <location>
        <begin status="unknown"/>
        <end position="567"/>
    </location>
</feature>
<feature type="DNA-binding region" description="OB" evidence="1">
    <location>
        <begin position="113"/>
        <end position="191"/>
    </location>
</feature>
<feature type="sequence conflict" description="In Ref. 5; CAA10904." evidence="7" ref="5">
    <original>N</original>
    <variation>Y</variation>
    <location>
        <position position="279"/>
    </location>
</feature>